<keyword id="KW-0687">Ribonucleoprotein</keyword>
<keyword id="KW-0689">Ribosomal protein</keyword>
<keyword id="KW-0694">RNA-binding</keyword>
<keyword id="KW-0699">rRNA-binding</keyword>
<proteinExistence type="inferred from homology"/>
<name>RL2_LEPBL</name>
<comment type="function">
    <text evidence="1">One of the primary rRNA binding proteins. Required for association of the 30S and 50S subunits to form the 70S ribosome, for tRNA binding and peptide bond formation. It has been suggested to have peptidyltransferase activity; this is somewhat controversial. Makes several contacts with the 16S rRNA in the 70S ribosome.</text>
</comment>
<comment type="subunit">
    <text evidence="1">Part of the 50S ribosomal subunit. Forms a bridge to the 30S subunit in the 70S ribosome.</text>
</comment>
<comment type="similarity">
    <text evidence="1">Belongs to the universal ribosomal protein uL2 family.</text>
</comment>
<reference key="1">
    <citation type="journal article" date="2006" name="Proc. Natl. Acad. Sci. U.S.A.">
        <title>Genome reduction in Leptospira borgpetersenii reflects limited transmission potential.</title>
        <authorList>
            <person name="Bulach D.M."/>
            <person name="Zuerner R.L."/>
            <person name="Wilson P."/>
            <person name="Seemann T."/>
            <person name="McGrath A."/>
            <person name="Cullen P.A."/>
            <person name="Davis J."/>
            <person name="Johnson M."/>
            <person name="Kuczek E."/>
            <person name="Alt D.P."/>
            <person name="Peterson-Burch B."/>
            <person name="Coppel R.L."/>
            <person name="Rood J.I."/>
            <person name="Davies J.K."/>
            <person name="Adler B."/>
        </authorList>
    </citation>
    <scope>NUCLEOTIDE SEQUENCE [LARGE SCALE GENOMIC DNA]</scope>
    <source>
        <strain>L550</strain>
    </source>
</reference>
<evidence type="ECO:0000255" key="1">
    <source>
        <dbReference type="HAMAP-Rule" id="MF_01320"/>
    </source>
</evidence>
<evidence type="ECO:0000256" key="2">
    <source>
        <dbReference type="SAM" id="MobiDB-lite"/>
    </source>
</evidence>
<evidence type="ECO:0000305" key="3"/>
<gene>
    <name evidence="1" type="primary">rplB1</name>
    <name type="ordered locus">LBL_0416</name>
</gene>
<gene>
    <name evidence="1" type="primary">rplB2</name>
    <name type="ordered locus">LBL_0456</name>
</gene>
<organism>
    <name type="scientific">Leptospira borgpetersenii serovar Hardjo-bovis (strain L550)</name>
    <dbReference type="NCBI Taxonomy" id="355276"/>
    <lineage>
        <taxon>Bacteria</taxon>
        <taxon>Pseudomonadati</taxon>
        <taxon>Spirochaetota</taxon>
        <taxon>Spirochaetia</taxon>
        <taxon>Leptospirales</taxon>
        <taxon>Leptospiraceae</taxon>
        <taxon>Leptospira</taxon>
    </lineage>
</organism>
<protein>
    <recommendedName>
        <fullName evidence="1">Large ribosomal subunit protein uL2</fullName>
    </recommendedName>
    <alternativeName>
        <fullName evidence="3">50S ribosomal protein L2</fullName>
    </alternativeName>
</protein>
<dbReference type="EMBL" id="CP000348">
    <property type="protein sequence ID" value="ABJ78014.1"/>
    <property type="molecule type" value="Genomic_DNA"/>
</dbReference>
<dbReference type="EMBL" id="CP000348">
    <property type="protein sequence ID" value="ABJ78054.1"/>
    <property type="molecule type" value="Genomic_DNA"/>
</dbReference>
<dbReference type="SMR" id="Q055E1"/>
<dbReference type="KEGG" id="lbl:LBL_0416"/>
<dbReference type="KEGG" id="lbl:LBL_0456"/>
<dbReference type="HOGENOM" id="CLU_036235_2_1_12"/>
<dbReference type="GO" id="GO:0015934">
    <property type="term" value="C:large ribosomal subunit"/>
    <property type="evidence" value="ECO:0007669"/>
    <property type="project" value="InterPro"/>
</dbReference>
<dbReference type="GO" id="GO:0019843">
    <property type="term" value="F:rRNA binding"/>
    <property type="evidence" value="ECO:0007669"/>
    <property type="project" value="UniProtKB-UniRule"/>
</dbReference>
<dbReference type="GO" id="GO:0003735">
    <property type="term" value="F:structural constituent of ribosome"/>
    <property type="evidence" value="ECO:0007669"/>
    <property type="project" value="InterPro"/>
</dbReference>
<dbReference type="GO" id="GO:0016740">
    <property type="term" value="F:transferase activity"/>
    <property type="evidence" value="ECO:0007669"/>
    <property type="project" value="InterPro"/>
</dbReference>
<dbReference type="GO" id="GO:0002181">
    <property type="term" value="P:cytoplasmic translation"/>
    <property type="evidence" value="ECO:0007669"/>
    <property type="project" value="TreeGrafter"/>
</dbReference>
<dbReference type="FunFam" id="2.30.30.30:FF:000001">
    <property type="entry name" value="50S ribosomal protein L2"/>
    <property type="match status" value="1"/>
</dbReference>
<dbReference type="FunFam" id="2.40.50.140:FF:000003">
    <property type="entry name" value="50S ribosomal protein L2"/>
    <property type="match status" value="1"/>
</dbReference>
<dbReference type="FunFam" id="4.10.950.10:FF:000001">
    <property type="entry name" value="50S ribosomal protein L2"/>
    <property type="match status" value="1"/>
</dbReference>
<dbReference type="Gene3D" id="2.30.30.30">
    <property type="match status" value="1"/>
</dbReference>
<dbReference type="Gene3D" id="2.40.50.140">
    <property type="entry name" value="Nucleic acid-binding proteins"/>
    <property type="match status" value="1"/>
</dbReference>
<dbReference type="Gene3D" id="4.10.950.10">
    <property type="entry name" value="Ribosomal protein L2, domain 3"/>
    <property type="match status" value="1"/>
</dbReference>
<dbReference type="HAMAP" id="MF_01320_B">
    <property type="entry name" value="Ribosomal_uL2_B"/>
    <property type="match status" value="1"/>
</dbReference>
<dbReference type="InterPro" id="IPR012340">
    <property type="entry name" value="NA-bd_OB-fold"/>
</dbReference>
<dbReference type="InterPro" id="IPR014722">
    <property type="entry name" value="Rib_uL2_dom2"/>
</dbReference>
<dbReference type="InterPro" id="IPR002171">
    <property type="entry name" value="Ribosomal_uL2"/>
</dbReference>
<dbReference type="InterPro" id="IPR005880">
    <property type="entry name" value="Ribosomal_uL2_bac/org-type"/>
</dbReference>
<dbReference type="InterPro" id="IPR022669">
    <property type="entry name" value="Ribosomal_uL2_C"/>
</dbReference>
<dbReference type="InterPro" id="IPR022671">
    <property type="entry name" value="Ribosomal_uL2_CS"/>
</dbReference>
<dbReference type="InterPro" id="IPR014726">
    <property type="entry name" value="Ribosomal_uL2_dom3"/>
</dbReference>
<dbReference type="InterPro" id="IPR022666">
    <property type="entry name" value="Ribosomal_uL2_RNA-bd_dom"/>
</dbReference>
<dbReference type="InterPro" id="IPR008991">
    <property type="entry name" value="Translation_prot_SH3-like_sf"/>
</dbReference>
<dbReference type="NCBIfam" id="TIGR01171">
    <property type="entry name" value="rplB_bact"/>
    <property type="match status" value="1"/>
</dbReference>
<dbReference type="PANTHER" id="PTHR13691:SF5">
    <property type="entry name" value="LARGE RIBOSOMAL SUBUNIT PROTEIN UL2M"/>
    <property type="match status" value="1"/>
</dbReference>
<dbReference type="PANTHER" id="PTHR13691">
    <property type="entry name" value="RIBOSOMAL PROTEIN L2"/>
    <property type="match status" value="1"/>
</dbReference>
<dbReference type="Pfam" id="PF00181">
    <property type="entry name" value="Ribosomal_L2"/>
    <property type="match status" value="1"/>
</dbReference>
<dbReference type="Pfam" id="PF03947">
    <property type="entry name" value="Ribosomal_L2_C"/>
    <property type="match status" value="1"/>
</dbReference>
<dbReference type="PIRSF" id="PIRSF002158">
    <property type="entry name" value="Ribosomal_L2"/>
    <property type="match status" value="1"/>
</dbReference>
<dbReference type="SMART" id="SM01383">
    <property type="entry name" value="Ribosomal_L2"/>
    <property type="match status" value="1"/>
</dbReference>
<dbReference type="SMART" id="SM01382">
    <property type="entry name" value="Ribosomal_L2_C"/>
    <property type="match status" value="1"/>
</dbReference>
<dbReference type="SUPFAM" id="SSF50249">
    <property type="entry name" value="Nucleic acid-binding proteins"/>
    <property type="match status" value="1"/>
</dbReference>
<dbReference type="SUPFAM" id="SSF50104">
    <property type="entry name" value="Translation proteins SH3-like domain"/>
    <property type="match status" value="1"/>
</dbReference>
<dbReference type="PROSITE" id="PS00467">
    <property type="entry name" value="RIBOSOMAL_L2"/>
    <property type="match status" value="1"/>
</dbReference>
<sequence>MGIKKFKPVTSASRYKSVLDFKEITETEPYKPLTLTLSYKAGRGDGGKISVRHKGGRVKRKYRIIDFKRRKTNVSAVVKTLEYDPNRSAFISLICYKDGEYAYILAPDGIKVGDTVQSGAGSEIKIGNAMPIGKIPPGTNVHNVELQIGRGGQIARTAGSFGTIAGRDGEYILLKLPSTEVRKVHENCYATIGICSNKDHNLVSIGKAGRSRWLGKRPTVRGVVMNPVDHPHGGGEGRTSGGRHPVSPWGQPTKGYKTRRSARPSDKFIVQKRKRNRNR</sequence>
<accession>Q055E1</accession>
<feature type="chain" id="PRO_0000309947" description="Large ribosomal subunit protein uL2">
    <location>
        <begin position="1"/>
        <end position="279"/>
    </location>
</feature>
<feature type="region of interest" description="Disordered" evidence="2">
    <location>
        <begin position="223"/>
        <end position="279"/>
    </location>
</feature>
<feature type="compositionally biased region" description="Basic residues" evidence="2">
    <location>
        <begin position="270"/>
        <end position="279"/>
    </location>
</feature>